<keyword id="KW-0378">Hydrolase</keyword>
<keyword id="KW-0719">Serine esterase</keyword>
<sequence length="414" mass="46995">MTQANLSETLFKPRFKHPETSTLVRRFNHGAQPPVQSALDGKTIPHWYRMINRLMWIWRGIDPREILDVQARIVMSDAERTDDDLYDTVIGYRGGNWIYEWATQAMVWQQKACTEEDPQLSGRHWLHAATLYNIAAYPHLKGDDLAEQAQALSNRAYEEAAQRLPGTMRQMEFTVPGGAPITGFLHMPKGDGPFPTVLMCGGLDAMQTDYYSLYERYFAPRGIAMLTIDMPSVGFSSKWKLTQDSSLLHQHVLKALPNVPWVDHTRVAAFGFRFGANVAVRLAYLESPRLKAVACLGPVVHTLLSDFKCQQQVPEMYLDVLASRLGMHDASDEALRVELNRYSLKVQGLLGRRCPTPMLSGYWKNDPFSPEEDSRLITSSSADGKLLEIPFNPVYRNFDKGLQEITGWIEKRLC</sequence>
<protein>
    <recommendedName>
        <fullName evidence="1">Esterase FrsA</fullName>
        <ecNumber evidence="1">3.1.1.1</ecNumber>
    </recommendedName>
</protein>
<name>FRSA_SHIF8</name>
<feature type="chain" id="PRO_1000064490" description="Esterase FrsA">
    <location>
        <begin position="1"/>
        <end position="414"/>
    </location>
</feature>
<organism>
    <name type="scientific">Shigella flexneri serotype 5b (strain 8401)</name>
    <dbReference type="NCBI Taxonomy" id="373384"/>
    <lineage>
        <taxon>Bacteria</taxon>
        <taxon>Pseudomonadati</taxon>
        <taxon>Pseudomonadota</taxon>
        <taxon>Gammaproteobacteria</taxon>
        <taxon>Enterobacterales</taxon>
        <taxon>Enterobacteriaceae</taxon>
        <taxon>Shigella</taxon>
    </lineage>
</organism>
<dbReference type="EC" id="3.1.1.1" evidence="1"/>
<dbReference type="EMBL" id="CP000266">
    <property type="protein sequence ID" value="ABF02566.1"/>
    <property type="molecule type" value="Genomic_DNA"/>
</dbReference>
<dbReference type="RefSeq" id="WP_000189558.1">
    <property type="nucleotide sequence ID" value="NC_008258.1"/>
</dbReference>
<dbReference type="SMR" id="Q0T7R0"/>
<dbReference type="ESTHER" id="shifl-yafa">
    <property type="family name" value="Duf_1100-R"/>
</dbReference>
<dbReference type="KEGG" id="sfv:SFV_0291"/>
<dbReference type="HOGENOM" id="CLU_036819_0_0_6"/>
<dbReference type="Proteomes" id="UP000000659">
    <property type="component" value="Chromosome"/>
</dbReference>
<dbReference type="GO" id="GO:0106435">
    <property type="term" value="F:carboxylesterase activity"/>
    <property type="evidence" value="ECO:0007669"/>
    <property type="project" value="UniProtKB-EC"/>
</dbReference>
<dbReference type="FunFam" id="3.40.50.1820:FF:000022">
    <property type="entry name" value="Esterase FrsA"/>
    <property type="match status" value="1"/>
</dbReference>
<dbReference type="Gene3D" id="3.40.50.1820">
    <property type="entry name" value="alpha/beta hydrolase"/>
    <property type="match status" value="1"/>
</dbReference>
<dbReference type="HAMAP" id="MF_01063">
    <property type="entry name" value="FrsA"/>
    <property type="match status" value="1"/>
</dbReference>
<dbReference type="InterPro" id="IPR029058">
    <property type="entry name" value="AB_hydrolase_fold"/>
</dbReference>
<dbReference type="InterPro" id="IPR043423">
    <property type="entry name" value="FrsA"/>
</dbReference>
<dbReference type="InterPro" id="IPR010520">
    <property type="entry name" value="FrsA-like"/>
</dbReference>
<dbReference type="InterPro" id="IPR050261">
    <property type="entry name" value="FrsA_esterase"/>
</dbReference>
<dbReference type="NCBIfam" id="NF003460">
    <property type="entry name" value="PRK05077.1"/>
    <property type="match status" value="1"/>
</dbReference>
<dbReference type="PANTHER" id="PTHR22946">
    <property type="entry name" value="DIENELACTONE HYDROLASE DOMAIN-CONTAINING PROTEIN-RELATED"/>
    <property type="match status" value="1"/>
</dbReference>
<dbReference type="PANTHER" id="PTHR22946:SF4">
    <property type="entry name" value="ESTERASE FRSA"/>
    <property type="match status" value="1"/>
</dbReference>
<dbReference type="Pfam" id="PF06500">
    <property type="entry name" value="FrsA-like"/>
    <property type="match status" value="1"/>
</dbReference>
<dbReference type="SUPFAM" id="SSF53474">
    <property type="entry name" value="alpha/beta-Hydrolases"/>
    <property type="match status" value="1"/>
</dbReference>
<reference key="1">
    <citation type="journal article" date="2006" name="BMC Genomics">
        <title>Complete genome sequence of Shigella flexneri 5b and comparison with Shigella flexneri 2a.</title>
        <authorList>
            <person name="Nie H."/>
            <person name="Yang F."/>
            <person name="Zhang X."/>
            <person name="Yang J."/>
            <person name="Chen L."/>
            <person name="Wang J."/>
            <person name="Xiong Z."/>
            <person name="Peng J."/>
            <person name="Sun L."/>
            <person name="Dong J."/>
            <person name="Xue Y."/>
            <person name="Xu X."/>
            <person name="Chen S."/>
            <person name="Yao Z."/>
            <person name="Shen Y."/>
            <person name="Jin Q."/>
        </authorList>
    </citation>
    <scope>NUCLEOTIDE SEQUENCE [LARGE SCALE GENOMIC DNA]</scope>
    <source>
        <strain>8401</strain>
    </source>
</reference>
<accession>Q0T7R0</accession>
<gene>
    <name evidence="1" type="primary">frsA</name>
    <name type="ordered locus">SFV_0291</name>
</gene>
<proteinExistence type="inferred from homology"/>
<comment type="function">
    <text evidence="1">Catalyzes the hydrolysis of esters.</text>
</comment>
<comment type="catalytic activity">
    <reaction evidence="1">
        <text>a carboxylic ester + H2O = an alcohol + a carboxylate + H(+)</text>
        <dbReference type="Rhea" id="RHEA:21164"/>
        <dbReference type="ChEBI" id="CHEBI:15377"/>
        <dbReference type="ChEBI" id="CHEBI:15378"/>
        <dbReference type="ChEBI" id="CHEBI:29067"/>
        <dbReference type="ChEBI" id="CHEBI:30879"/>
        <dbReference type="ChEBI" id="CHEBI:33308"/>
        <dbReference type="EC" id="3.1.1.1"/>
    </reaction>
</comment>
<comment type="similarity">
    <text evidence="1">Belongs to the FrsA family.</text>
</comment>
<evidence type="ECO:0000255" key="1">
    <source>
        <dbReference type="HAMAP-Rule" id="MF_01063"/>
    </source>
</evidence>